<sequence length="806" mass="90202">MGKKRIVFFAYLPFFTIFMSFSFAGITKESPFSIGQTLSSSNGVYELGFFSLNNSQNQYLGIWFKSIIPQVVVWVANREKPVTDSAANLGISSNGSLLLSNGKHGVVWSTGDIFASNGSRAELTDHGNLVFIDKVSGRTLWQSFEHLGNTLLPTSIMMYNLVAGEKRGLTAWKSYTDPSPGEFVALITPQVPSQGIIMRGSTRYYRTGPWAKTRFTGSPQMDESYTSPFILTQDVNGSGYFSFVERGKPSRMILTSEGTMKVLVHNGMDWESTYEGPANSCDIYGVCGPFGLCVVSIPPKCKCFKGFVPKFAKEWKKGNWTSGCVRRTELHCQGNSSGKDANVFYTVPNIKPPDFYEYANSQNAEECHQNCLHNCSCLAFSYIPGIGCLMWSKDLMDTRQFSAAGELLSIRLARSELDVNKRKMTIVASTVSLTLFVIFGFAAFGFWRCRVEHNAHISNDAWRNFLQSQDVPGLEFFEMNAIQTATNNFSLSNKLGPGGFGSVYKARNGKLQDGREIAVKRLSSSSGQGKQEFMNEIVLISKLQHRNLVRVLGCCVEGTEKLLIYGFLKNKSLDTFVFDARKKLELDWPKRFEIIEGIARGLLYLHRDSRLRVIHRDLKVSNILLDEKMNPKISDFGLARMFQGTQYQEKTRRVVGTLGYMSPEYAWTGVFSEKSDIYSFGVLLLEIISGKKISSFSYGEEGKALLAYAWECWCETREVNFLDQALADSSHPSEVGRCVQIGLLCVQHEPADRPNTLELLSMLTTTSDLPLPKKPTFVVHTRKDESPSNDSMITVNEMTESVIQGR</sequence>
<dbReference type="EC" id="2.7.11.1"/>
<dbReference type="EMBL" id="AC004255">
    <property type="protein sequence ID" value="AAC13898.1"/>
    <property type="status" value="ALT_SEQ"/>
    <property type="molecule type" value="Genomic_DNA"/>
</dbReference>
<dbReference type="EMBL" id="CP002684">
    <property type="protein sequence ID" value="AEE33837.1"/>
    <property type="molecule type" value="Genomic_DNA"/>
</dbReference>
<dbReference type="PIR" id="F96639">
    <property type="entry name" value="F96639"/>
</dbReference>
<dbReference type="RefSeq" id="NP_176338.1">
    <property type="nucleotide sequence ID" value="NM_104824.3"/>
</dbReference>
<dbReference type="SMR" id="O64777"/>
<dbReference type="FunCoup" id="O64777">
    <property type="interactions" value="11"/>
</dbReference>
<dbReference type="GlyGen" id="O64777">
    <property type="glycosylation" value="7 sites"/>
</dbReference>
<dbReference type="PaxDb" id="3702-AT1G61430.1"/>
<dbReference type="EnsemblPlants" id="AT1G61430.1">
    <property type="protein sequence ID" value="AT1G61430.1"/>
    <property type="gene ID" value="AT1G61430"/>
</dbReference>
<dbReference type="GeneID" id="842437"/>
<dbReference type="Gramene" id="AT1G61430.1">
    <property type="protein sequence ID" value="AT1G61430.1"/>
    <property type="gene ID" value="AT1G61430"/>
</dbReference>
<dbReference type="KEGG" id="ath:AT1G61430"/>
<dbReference type="Araport" id="AT1G61430"/>
<dbReference type="TAIR" id="AT1G61430"/>
<dbReference type="HOGENOM" id="CLU_000288_116_1_1"/>
<dbReference type="InParanoid" id="O64777"/>
<dbReference type="PhylomeDB" id="O64777"/>
<dbReference type="PRO" id="PR:O64777"/>
<dbReference type="Proteomes" id="UP000006548">
    <property type="component" value="Chromosome 1"/>
</dbReference>
<dbReference type="ExpressionAtlas" id="O64777">
    <property type="expression patterns" value="baseline and differential"/>
</dbReference>
<dbReference type="GO" id="GO:0005886">
    <property type="term" value="C:plasma membrane"/>
    <property type="evidence" value="ECO:0007669"/>
    <property type="project" value="UniProtKB-SubCell"/>
</dbReference>
<dbReference type="GO" id="GO:0005524">
    <property type="term" value="F:ATP binding"/>
    <property type="evidence" value="ECO:0007669"/>
    <property type="project" value="UniProtKB-KW"/>
</dbReference>
<dbReference type="GO" id="GO:0005516">
    <property type="term" value="F:calmodulin binding"/>
    <property type="evidence" value="ECO:0000250"/>
    <property type="project" value="UniProtKB"/>
</dbReference>
<dbReference type="GO" id="GO:0030246">
    <property type="term" value="F:carbohydrate binding"/>
    <property type="evidence" value="ECO:0007669"/>
    <property type="project" value="UniProtKB-KW"/>
</dbReference>
<dbReference type="GO" id="GO:0106310">
    <property type="term" value="F:protein serine kinase activity"/>
    <property type="evidence" value="ECO:0007669"/>
    <property type="project" value="RHEA"/>
</dbReference>
<dbReference type="GO" id="GO:0004674">
    <property type="term" value="F:protein serine/threonine kinase activity"/>
    <property type="evidence" value="ECO:0000250"/>
    <property type="project" value="UniProtKB"/>
</dbReference>
<dbReference type="GO" id="GO:0031625">
    <property type="term" value="F:ubiquitin protein ligase binding"/>
    <property type="evidence" value="ECO:0007669"/>
    <property type="project" value="UniProtKB-ARBA"/>
</dbReference>
<dbReference type="GO" id="GO:0048544">
    <property type="term" value="P:recognition of pollen"/>
    <property type="evidence" value="ECO:0007669"/>
    <property type="project" value="InterPro"/>
</dbReference>
<dbReference type="CDD" id="cd00028">
    <property type="entry name" value="B_lectin"/>
    <property type="match status" value="1"/>
</dbReference>
<dbReference type="CDD" id="cd01098">
    <property type="entry name" value="PAN_AP_plant"/>
    <property type="match status" value="1"/>
</dbReference>
<dbReference type="CDD" id="cd14066">
    <property type="entry name" value="STKc_IRAK"/>
    <property type="match status" value="1"/>
</dbReference>
<dbReference type="FunFam" id="1.10.510.10:FF:000345">
    <property type="entry name" value="G-type lectin S-receptor-like serine/threonine-protein kinase"/>
    <property type="match status" value="1"/>
</dbReference>
<dbReference type="FunFam" id="2.90.10.10:FF:000003">
    <property type="entry name" value="G-type lectin S-receptor-like serine/threonine-protein kinase"/>
    <property type="match status" value="1"/>
</dbReference>
<dbReference type="FunFam" id="3.30.200.20:FF:000401">
    <property type="entry name" value="G-type lectin S-receptor-like serine/threonine-protein kinase SD1-29"/>
    <property type="match status" value="1"/>
</dbReference>
<dbReference type="Gene3D" id="2.90.10.10">
    <property type="entry name" value="Bulb-type lectin domain"/>
    <property type="match status" value="1"/>
</dbReference>
<dbReference type="Gene3D" id="3.30.200.20">
    <property type="entry name" value="Phosphorylase Kinase, domain 1"/>
    <property type="match status" value="1"/>
</dbReference>
<dbReference type="Gene3D" id="1.10.510.10">
    <property type="entry name" value="Transferase(Phosphotransferase) domain 1"/>
    <property type="match status" value="1"/>
</dbReference>
<dbReference type="InterPro" id="IPR001480">
    <property type="entry name" value="Bulb-type_lectin_dom"/>
</dbReference>
<dbReference type="InterPro" id="IPR036426">
    <property type="entry name" value="Bulb-type_lectin_dom_sf"/>
</dbReference>
<dbReference type="InterPro" id="IPR011009">
    <property type="entry name" value="Kinase-like_dom_sf"/>
</dbReference>
<dbReference type="InterPro" id="IPR003609">
    <property type="entry name" value="Pan_app"/>
</dbReference>
<dbReference type="InterPro" id="IPR000719">
    <property type="entry name" value="Prot_kinase_dom"/>
</dbReference>
<dbReference type="InterPro" id="IPR021820">
    <property type="entry name" value="S-locus_recpt_kinase_C"/>
</dbReference>
<dbReference type="InterPro" id="IPR000858">
    <property type="entry name" value="S_locus_glycoprot_dom"/>
</dbReference>
<dbReference type="InterPro" id="IPR001245">
    <property type="entry name" value="Ser-Thr/Tyr_kinase_cat_dom"/>
</dbReference>
<dbReference type="InterPro" id="IPR008271">
    <property type="entry name" value="Ser/Thr_kinase_AS"/>
</dbReference>
<dbReference type="InterPro" id="IPR024171">
    <property type="entry name" value="SRK-like_kinase"/>
</dbReference>
<dbReference type="PANTHER" id="PTHR27002:SF542">
    <property type="entry name" value="BNACNNG56910D PROTEIN"/>
    <property type="match status" value="1"/>
</dbReference>
<dbReference type="PANTHER" id="PTHR27002">
    <property type="entry name" value="RECEPTOR-LIKE SERINE/THREONINE-PROTEIN KINASE SD1-8"/>
    <property type="match status" value="1"/>
</dbReference>
<dbReference type="Pfam" id="PF01453">
    <property type="entry name" value="B_lectin"/>
    <property type="match status" value="1"/>
</dbReference>
<dbReference type="Pfam" id="PF11883">
    <property type="entry name" value="DUF3403"/>
    <property type="match status" value="1"/>
</dbReference>
<dbReference type="Pfam" id="PF08276">
    <property type="entry name" value="PAN_2"/>
    <property type="match status" value="1"/>
</dbReference>
<dbReference type="Pfam" id="PF07714">
    <property type="entry name" value="PK_Tyr_Ser-Thr"/>
    <property type="match status" value="1"/>
</dbReference>
<dbReference type="Pfam" id="PF00954">
    <property type="entry name" value="S_locus_glycop"/>
    <property type="match status" value="1"/>
</dbReference>
<dbReference type="PIRSF" id="PIRSF000641">
    <property type="entry name" value="SRK"/>
    <property type="match status" value="1"/>
</dbReference>
<dbReference type="SMART" id="SM00108">
    <property type="entry name" value="B_lectin"/>
    <property type="match status" value="1"/>
</dbReference>
<dbReference type="SMART" id="SM00473">
    <property type="entry name" value="PAN_AP"/>
    <property type="match status" value="1"/>
</dbReference>
<dbReference type="SMART" id="SM00220">
    <property type="entry name" value="S_TKc"/>
    <property type="match status" value="1"/>
</dbReference>
<dbReference type="SUPFAM" id="SSF51110">
    <property type="entry name" value="alpha-D-mannose-specific plant lectins"/>
    <property type="match status" value="1"/>
</dbReference>
<dbReference type="SUPFAM" id="SSF56112">
    <property type="entry name" value="Protein kinase-like (PK-like)"/>
    <property type="match status" value="1"/>
</dbReference>
<dbReference type="PROSITE" id="PS50927">
    <property type="entry name" value="BULB_LECTIN"/>
    <property type="match status" value="1"/>
</dbReference>
<dbReference type="PROSITE" id="PS50948">
    <property type="entry name" value="PAN"/>
    <property type="match status" value="1"/>
</dbReference>
<dbReference type="PROSITE" id="PS50011">
    <property type="entry name" value="PROTEIN_KINASE_DOM"/>
    <property type="match status" value="1"/>
</dbReference>
<dbReference type="PROSITE" id="PS00108">
    <property type="entry name" value="PROTEIN_KINASE_ST"/>
    <property type="match status" value="1"/>
</dbReference>
<keyword id="KW-0067">ATP-binding</keyword>
<keyword id="KW-1003">Cell membrane</keyword>
<keyword id="KW-1015">Disulfide bond</keyword>
<keyword id="KW-0245">EGF-like domain</keyword>
<keyword id="KW-0325">Glycoprotein</keyword>
<keyword id="KW-0418">Kinase</keyword>
<keyword id="KW-0430">Lectin</keyword>
<keyword id="KW-0472">Membrane</keyword>
<keyword id="KW-0547">Nucleotide-binding</keyword>
<keyword id="KW-0597">Phosphoprotein</keyword>
<keyword id="KW-0675">Receptor</keyword>
<keyword id="KW-1185">Reference proteome</keyword>
<keyword id="KW-0723">Serine/threonine-protein kinase</keyword>
<keyword id="KW-0732">Signal</keyword>
<keyword id="KW-0808">Transferase</keyword>
<keyword id="KW-0812">Transmembrane</keyword>
<keyword id="KW-1133">Transmembrane helix</keyword>
<accession>O64777</accession>
<gene>
    <name type="ordered locus">At1g61430</name>
    <name type="ORF">T1F9.8</name>
</gene>
<comment type="catalytic activity">
    <reaction>
        <text>L-seryl-[protein] + ATP = O-phospho-L-seryl-[protein] + ADP + H(+)</text>
        <dbReference type="Rhea" id="RHEA:17989"/>
        <dbReference type="Rhea" id="RHEA-COMP:9863"/>
        <dbReference type="Rhea" id="RHEA-COMP:11604"/>
        <dbReference type="ChEBI" id="CHEBI:15378"/>
        <dbReference type="ChEBI" id="CHEBI:29999"/>
        <dbReference type="ChEBI" id="CHEBI:30616"/>
        <dbReference type="ChEBI" id="CHEBI:83421"/>
        <dbReference type="ChEBI" id="CHEBI:456216"/>
        <dbReference type="EC" id="2.7.11.1"/>
    </reaction>
</comment>
<comment type="catalytic activity">
    <reaction>
        <text>L-threonyl-[protein] + ATP = O-phospho-L-threonyl-[protein] + ADP + H(+)</text>
        <dbReference type="Rhea" id="RHEA:46608"/>
        <dbReference type="Rhea" id="RHEA-COMP:11060"/>
        <dbReference type="Rhea" id="RHEA-COMP:11605"/>
        <dbReference type="ChEBI" id="CHEBI:15378"/>
        <dbReference type="ChEBI" id="CHEBI:30013"/>
        <dbReference type="ChEBI" id="CHEBI:30616"/>
        <dbReference type="ChEBI" id="CHEBI:61977"/>
        <dbReference type="ChEBI" id="CHEBI:456216"/>
        <dbReference type="EC" id="2.7.11.1"/>
    </reaction>
</comment>
<comment type="subcellular location">
    <subcellularLocation>
        <location evidence="1">Cell membrane</location>
        <topology evidence="1">Single-pass type I membrane protein</topology>
    </subcellularLocation>
</comment>
<comment type="similarity">
    <text evidence="5">Belongs to the protein kinase superfamily. Ser/Thr protein kinase family.</text>
</comment>
<comment type="sequence caution" evidence="8">
    <conflict type="erroneous gene model prediction">
        <sequence resource="EMBL-CDS" id="AAC13898"/>
    </conflict>
</comment>
<protein>
    <recommendedName>
        <fullName>G-type lectin S-receptor-like serine/threonine-protein kinase At1g61430</fullName>
        <ecNumber>2.7.11.1</ecNumber>
    </recommendedName>
</protein>
<evidence type="ECO:0000250" key="1"/>
<evidence type="ECO:0000250" key="2">
    <source>
        <dbReference type="UniProtKB" id="Q9LPZ9"/>
    </source>
</evidence>
<evidence type="ECO:0000255" key="3"/>
<evidence type="ECO:0000255" key="4">
    <source>
        <dbReference type="PROSITE-ProRule" id="PRU00038"/>
    </source>
</evidence>
<evidence type="ECO:0000255" key="5">
    <source>
        <dbReference type="PROSITE-ProRule" id="PRU00159"/>
    </source>
</evidence>
<evidence type="ECO:0000255" key="6">
    <source>
        <dbReference type="PROSITE-ProRule" id="PRU00315"/>
    </source>
</evidence>
<evidence type="ECO:0000255" key="7">
    <source>
        <dbReference type="PROSITE-ProRule" id="PRU10027"/>
    </source>
</evidence>
<evidence type="ECO:0000305" key="8"/>
<organism>
    <name type="scientific">Arabidopsis thaliana</name>
    <name type="common">Mouse-ear cress</name>
    <dbReference type="NCBI Taxonomy" id="3702"/>
    <lineage>
        <taxon>Eukaryota</taxon>
        <taxon>Viridiplantae</taxon>
        <taxon>Streptophyta</taxon>
        <taxon>Embryophyta</taxon>
        <taxon>Tracheophyta</taxon>
        <taxon>Spermatophyta</taxon>
        <taxon>Magnoliopsida</taxon>
        <taxon>eudicotyledons</taxon>
        <taxon>Gunneridae</taxon>
        <taxon>Pentapetalae</taxon>
        <taxon>rosids</taxon>
        <taxon>malvids</taxon>
        <taxon>Brassicales</taxon>
        <taxon>Brassicaceae</taxon>
        <taxon>Camelineae</taxon>
        <taxon>Arabidopsis</taxon>
    </lineage>
</organism>
<feature type="signal peptide" evidence="3">
    <location>
        <begin position="1"/>
        <end position="24"/>
    </location>
</feature>
<feature type="chain" id="PRO_0000401311" description="G-type lectin S-receptor-like serine/threonine-protein kinase At1g61430">
    <location>
        <begin position="25"/>
        <end position="806"/>
    </location>
</feature>
<feature type="topological domain" description="Extracellular" evidence="3">
    <location>
        <begin position="25"/>
        <end position="425"/>
    </location>
</feature>
<feature type="transmembrane region" description="Helical" evidence="3">
    <location>
        <begin position="426"/>
        <end position="446"/>
    </location>
</feature>
<feature type="topological domain" description="Cytoplasmic" evidence="3">
    <location>
        <begin position="447"/>
        <end position="806"/>
    </location>
</feature>
<feature type="domain" description="Bulb-type lectin" evidence="4">
    <location>
        <begin position="25"/>
        <end position="144"/>
    </location>
</feature>
<feature type="domain" description="EGF-like">
    <location>
        <begin position="277"/>
        <end position="313"/>
    </location>
</feature>
<feature type="domain" description="PAN" evidence="6">
    <location>
        <begin position="332"/>
        <end position="414"/>
    </location>
</feature>
<feature type="domain" description="Protein kinase" evidence="5">
    <location>
        <begin position="489"/>
        <end position="777"/>
    </location>
</feature>
<feature type="region of interest" description="CaM-binding" evidence="1">
    <location>
        <begin position="581"/>
        <end position="598"/>
    </location>
</feature>
<feature type="active site" description="Proton acceptor" evidence="5 7">
    <location>
        <position position="617"/>
    </location>
</feature>
<feature type="binding site" evidence="5">
    <location>
        <begin position="495"/>
        <end position="503"/>
    </location>
    <ligand>
        <name>ATP</name>
        <dbReference type="ChEBI" id="CHEBI:30616"/>
    </ligand>
</feature>
<feature type="binding site" evidence="5">
    <location>
        <position position="520"/>
    </location>
    <ligand>
        <name>ATP</name>
        <dbReference type="ChEBI" id="CHEBI:30616"/>
    </ligand>
</feature>
<feature type="modified residue" description="Phosphoserine" evidence="2">
    <location>
        <position position="526"/>
    </location>
</feature>
<feature type="modified residue" description="Phosphoserine" evidence="2">
    <location>
        <position position="541"/>
    </location>
</feature>
<feature type="modified residue" description="Phosphoserine" evidence="2">
    <location>
        <position position="621"/>
    </location>
</feature>
<feature type="modified residue" description="Phosphoserine" evidence="2">
    <location>
        <position position="634"/>
    </location>
</feature>
<feature type="modified residue" description="Phosphothreonine" evidence="2">
    <location>
        <position position="651"/>
    </location>
</feature>
<feature type="modified residue" description="Phosphoserine" evidence="2">
    <location>
        <position position="694"/>
    </location>
</feature>
<feature type="modified residue" description="Phosphoserine" evidence="2">
    <location>
        <position position="695"/>
    </location>
</feature>
<feature type="modified residue" description="Phosphoserine" evidence="2">
    <location>
        <position position="788"/>
    </location>
</feature>
<feature type="glycosylation site" description="N-linked (GlcNAc...) asparagine" evidence="3">
    <location>
        <position position="53"/>
    </location>
</feature>
<feature type="glycosylation site" description="N-linked (GlcNAc...) asparagine" evidence="3">
    <location>
        <position position="94"/>
    </location>
</feature>
<feature type="glycosylation site" description="N-linked (GlcNAc...) asparagine" evidence="3">
    <location>
        <position position="117"/>
    </location>
</feature>
<feature type="glycosylation site" description="N-linked (GlcNAc...) asparagine" evidence="3">
    <location>
        <position position="236"/>
    </location>
</feature>
<feature type="glycosylation site" description="N-linked (GlcNAc...) asparagine" evidence="3">
    <location>
        <position position="319"/>
    </location>
</feature>
<feature type="glycosylation site" description="N-linked (GlcNAc...) asparagine" evidence="3">
    <location>
        <position position="335"/>
    </location>
</feature>
<feature type="glycosylation site" description="N-linked (GlcNAc...) asparagine" evidence="3">
    <location>
        <position position="374"/>
    </location>
</feature>
<feature type="disulfide bond" evidence="1">
    <location>
        <begin position="281"/>
        <end position="293"/>
    </location>
</feature>
<feature type="disulfide bond" evidence="1">
    <location>
        <begin position="287"/>
        <end position="301"/>
    </location>
</feature>
<feature type="disulfide bond" evidence="1">
    <location>
        <begin position="367"/>
        <end position="388"/>
    </location>
</feature>
<feature type="disulfide bond" evidence="1">
    <location>
        <begin position="371"/>
        <end position="377"/>
    </location>
</feature>
<name>Y1643_ARATH</name>
<reference key="1">
    <citation type="journal article" date="2000" name="Nature">
        <title>Sequence and analysis of chromosome 1 of the plant Arabidopsis thaliana.</title>
        <authorList>
            <person name="Theologis A."/>
            <person name="Ecker J.R."/>
            <person name="Palm C.J."/>
            <person name="Federspiel N.A."/>
            <person name="Kaul S."/>
            <person name="White O."/>
            <person name="Alonso J."/>
            <person name="Altafi H."/>
            <person name="Araujo R."/>
            <person name="Bowman C.L."/>
            <person name="Brooks S.Y."/>
            <person name="Buehler E."/>
            <person name="Chan A."/>
            <person name="Chao Q."/>
            <person name="Chen H."/>
            <person name="Cheuk R.F."/>
            <person name="Chin C.W."/>
            <person name="Chung M.K."/>
            <person name="Conn L."/>
            <person name="Conway A.B."/>
            <person name="Conway A.R."/>
            <person name="Creasy T.H."/>
            <person name="Dewar K."/>
            <person name="Dunn P."/>
            <person name="Etgu P."/>
            <person name="Feldblyum T.V."/>
            <person name="Feng J.-D."/>
            <person name="Fong B."/>
            <person name="Fujii C.Y."/>
            <person name="Gill J.E."/>
            <person name="Goldsmith A.D."/>
            <person name="Haas B."/>
            <person name="Hansen N.F."/>
            <person name="Hughes B."/>
            <person name="Huizar L."/>
            <person name="Hunter J.L."/>
            <person name="Jenkins J."/>
            <person name="Johnson-Hopson C."/>
            <person name="Khan S."/>
            <person name="Khaykin E."/>
            <person name="Kim C.J."/>
            <person name="Koo H.L."/>
            <person name="Kremenetskaia I."/>
            <person name="Kurtz D.B."/>
            <person name="Kwan A."/>
            <person name="Lam B."/>
            <person name="Langin-Hooper S."/>
            <person name="Lee A."/>
            <person name="Lee J.M."/>
            <person name="Lenz C.A."/>
            <person name="Li J.H."/>
            <person name="Li Y.-P."/>
            <person name="Lin X."/>
            <person name="Liu S.X."/>
            <person name="Liu Z.A."/>
            <person name="Luros J.S."/>
            <person name="Maiti R."/>
            <person name="Marziali A."/>
            <person name="Militscher J."/>
            <person name="Miranda M."/>
            <person name="Nguyen M."/>
            <person name="Nierman W.C."/>
            <person name="Osborne B.I."/>
            <person name="Pai G."/>
            <person name="Peterson J."/>
            <person name="Pham P.K."/>
            <person name="Rizzo M."/>
            <person name="Rooney T."/>
            <person name="Rowley D."/>
            <person name="Sakano H."/>
            <person name="Salzberg S.L."/>
            <person name="Schwartz J.R."/>
            <person name="Shinn P."/>
            <person name="Southwick A.M."/>
            <person name="Sun H."/>
            <person name="Tallon L.J."/>
            <person name="Tambunga G."/>
            <person name="Toriumi M.J."/>
            <person name="Town C.D."/>
            <person name="Utterback T."/>
            <person name="Van Aken S."/>
            <person name="Vaysberg M."/>
            <person name="Vysotskaia V.S."/>
            <person name="Walker M."/>
            <person name="Wu D."/>
            <person name="Yu G."/>
            <person name="Fraser C.M."/>
            <person name="Venter J.C."/>
            <person name="Davis R.W."/>
        </authorList>
    </citation>
    <scope>NUCLEOTIDE SEQUENCE [LARGE SCALE GENOMIC DNA]</scope>
    <source>
        <strain>cv. Columbia</strain>
    </source>
</reference>
<reference key="2">
    <citation type="journal article" date="2017" name="Plant J.">
        <title>Araport11: a complete reannotation of the Arabidopsis thaliana reference genome.</title>
        <authorList>
            <person name="Cheng C.Y."/>
            <person name="Krishnakumar V."/>
            <person name="Chan A.P."/>
            <person name="Thibaud-Nissen F."/>
            <person name="Schobel S."/>
            <person name="Town C.D."/>
        </authorList>
    </citation>
    <scope>GENOME REANNOTATION</scope>
    <source>
        <strain>cv. Columbia</strain>
    </source>
</reference>
<proteinExistence type="evidence at transcript level"/>